<organism>
    <name type="scientific">Saccharomyces cerevisiae (strain ATCC 204508 / S288c)</name>
    <name type="common">Baker's yeast</name>
    <dbReference type="NCBI Taxonomy" id="559292"/>
    <lineage>
        <taxon>Eukaryota</taxon>
        <taxon>Fungi</taxon>
        <taxon>Dikarya</taxon>
        <taxon>Ascomycota</taxon>
        <taxon>Saccharomycotina</taxon>
        <taxon>Saccharomycetes</taxon>
        <taxon>Saccharomycetales</taxon>
        <taxon>Saccharomycetaceae</taxon>
        <taxon>Saccharomyces</taxon>
    </lineage>
</organism>
<dbReference type="EMBL" id="Z47746">
    <property type="protein sequence ID" value="CAA87680.1"/>
    <property type="molecule type" value="Genomic_DNA"/>
</dbReference>
<dbReference type="EMBL" id="BK006938">
    <property type="protein sequence ID" value="DAA11950.1"/>
    <property type="molecule type" value="Genomic_DNA"/>
</dbReference>
<dbReference type="PIR" id="S51255">
    <property type="entry name" value="S51255"/>
</dbReference>
<dbReference type="RefSeq" id="NP_010389.3">
    <property type="nucleotide sequence ID" value="NM_001180412.3"/>
</dbReference>
<dbReference type="BioGRID" id="32161">
    <property type="interactions" value="61"/>
</dbReference>
<dbReference type="FunCoup" id="Q03868">
    <property type="interactions" value="27"/>
</dbReference>
<dbReference type="IntAct" id="Q03868">
    <property type="interactions" value="5"/>
</dbReference>
<dbReference type="MINT" id="Q03868"/>
<dbReference type="STRING" id="4932.YDR104C"/>
<dbReference type="GlyGen" id="Q03868">
    <property type="glycosylation" value="1 site, 1 O-linked glycan (1 site)"/>
</dbReference>
<dbReference type="iPTMnet" id="Q03868"/>
<dbReference type="PaxDb" id="4932-YDR104C"/>
<dbReference type="PeptideAtlas" id="Q03868"/>
<dbReference type="EnsemblFungi" id="YDR104C_mRNA">
    <property type="protein sequence ID" value="YDR104C"/>
    <property type="gene ID" value="YDR104C"/>
</dbReference>
<dbReference type="GeneID" id="851681"/>
<dbReference type="KEGG" id="sce:YDR104C"/>
<dbReference type="AGR" id="SGD:S000002511"/>
<dbReference type="SGD" id="S000002511">
    <property type="gene designation" value="SPO71"/>
</dbReference>
<dbReference type="VEuPathDB" id="FungiDB:YDR104C"/>
<dbReference type="eggNOG" id="ENOG502QRAT">
    <property type="taxonomic scope" value="Eukaryota"/>
</dbReference>
<dbReference type="HOGENOM" id="CLU_003938_1_0_1"/>
<dbReference type="InParanoid" id="Q03868"/>
<dbReference type="OMA" id="GKSMVFM"/>
<dbReference type="OrthoDB" id="5579281at2759"/>
<dbReference type="BioCyc" id="YEAST:G3O-29706-MONOMER"/>
<dbReference type="BioGRID-ORCS" id="851681">
    <property type="hits" value="0 hits in 10 CRISPR screens"/>
</dbReference>
<dbReference type="PRO" id="PR:Q03868"/>
<dbReference type="Proteomes" id="UP000002311">
    <property type="component" value="Chromosome IV"/>
</dbReference>
<dbReference type="RNAct" id="Q03868">
    <property type="molecule type" value="protein"/>
</dbReference>
<dbReference type="GO" id="GO:0005628">
    <property type="term" value="C:prospore membrane"/>
    <property type="evidence" value="ECO:0000314"/>
    <property type="project" value="SGD"/>
</dbReference>
<dbReference type="GO" id="GO:0043495">
    <property type="term" value="F:protein-membrane adaptor activity"/>
    <property type="evidence" value="ECO:0000315"/>
    <property type="project" value="UniProtKB"/>
</dbReference>
<dbReference type="GO" id="GO:0032120">
    <property type="term" value="P:ascospore-type prospore membrane formation"/>
    <property type="evidence" value="ECO:0000315"/>
    <property type="project" value="UniProtKB"/>
</dbReference>
<dbReference type="GO" id="GO:1902657">
    <property type="term" value="P:protein localization to prospore membrane"/>
    <property type="evidence" value="ECO:0000314"/>
    <property type="project" value="SGD"/>
</dbReference>
<dbReference type="InterPro" id="IPR040345">
    <property type="entry name" value="Mug56/Spo71"/>
</dbReference>
<dbReference type="InterPro" id="IPR039486">
    <property type="entry name" value="Mug56/Spo71_PH"/>
</dbReference>
<dbReference type="InterPro" id="IPR001849">
    <property type="entry name" value="PH_domain"/>
</dbReference>
<dbReference type="InterPro" id="IPR029217">
    <property type="entry name" value="Spo7_2_N"/>
</dbReference>
<dbReference type="PANTHER" id="PTHR28076:SF1">
    <property type="entry name" value="PROSPORE MEMBRANE ADAPTER PROTEIN SPO71"/>
    <property type="match status" value="1"/>
</dbReference>
<dbReference type="PANTHER" id="PTHR28076">
    <property type="entry name" value="SPORULATION-SPECIFIC PROTEIN 71"/>
    <property type="match status" value="1"/>
</dbReference>
<dbReference type="Pfam" id="PF15404">
    <property type="entry name" value="PH_4"/>
    <property type="match status" value="1"/>
</dbReference>
<dbReference type="Pfam" id="PF23207">
    <property type="entry name" value="PH_SPO71"/>
    <property type="match status" value="1"/>
</dbReference>
<dbReference type="Pfam" id="PF15407">
    <property type="entry name" value="Spo7_2_N"/>
    <property type="match status" value="1"/>
</dbReference>
<dbReference type="SMART" id="SM00233">
    <property type="entry name" value="PH"/>
    <property type="match status" value="2"/>
</dbReference>
<dbReference type="SMART" id="SM01316">
    <property type="entry name" value="Spo7_2_N"/>
    <property type="match status" value="1"/>
</dbReference>
<dbReference type="SUPFAM" id="SSF50729">
    <property type="entry name" value="PH domain-like"/>
    <property type="match status" value="1"/>
</dbReference>
<protein>
    <recommendedName>
        <fullName evidence="6">Prospore membrane adapter protein SPO71</fullName>
    </recommendedName>
    <alternativeName>
        <fullName>Sporulation-specific protein 71</fullName>
    </alternativeName>
</protein>
<accession>Q03868</accession>
<accession>D6VS90</accession>
<proteinExistence type="evidence at protein level"/>
<evidence type="ECO:0000256" key="1">
    <source>
        <dbReference type="SAM" id="MobiDB-lite"/>
    </source>
</evidence>
<evidence type="ECO:0000269" key="2">
    <source>
    </source>
</evidence>
<evidence type="ECO:0000269" key="3">
    <source>
    </source>
</evidence>
<evidence type="ECO:0000269" key="4">
    <source>
    </source>
</evidence>
<evidence type="ECO:0000269" key="5">
    <source>
    </source>
</evidence>
<evidence type="ECO:0000305" key="6"/>
<evidence type="ECO:0000305" key="7">
    <source>
    </source>
</evidence>
<gene>
    <name type="primary">SPO71</name>
    <name type="ordered locus">YDR104C</name>
    <name type="ORF">YD8557.13c</name>
</gene>
<comment type="function">
    <text evidence="2 3">Recruits the lipid transfer protein VPS13 to the prospore membrane during sporulation, thereby aiding prospore membrane formation.</text>
</comment>
<comment type="subunit">
    <text evidence="3 4">Interacts (via PxP motif) with VPS13 (via SHR-BD domain); during prospore membrane formation.</text>
</comment>
<comment type="subcellular location">
    <subcellularLocation>
        <location evidence="3 7">Prospore membrane</location>
        <topology evidence="6">Peripheral membrane protein</topology>
    </subcellularLocation>
</comment>
<comment type="developmental stage">
    <text evidence="2 5">Expressed during sexual reproduction; expression increases during meiosis II (at protein level).</text>
</comment>
<comment type="disruption phenotype">
    <text evidence="2 3">Abnormal prospore membrane formation (PubMed:22611022, PubMed:24036347). Abolishes localization of VPS13 to the prospore membrane (PubMed:24036347). Accumulation of vesicles within the prospore membrane lumen and reduction of phosphatidylinositol in the membrane (PubMed:24036347). Abnormal spore wall formation; the first three layers are synthesized but abnormally deposited and the dityrosine layer is missing (PubMed:22611022). Sporulation specific septins are mislocalized (PubMed:22611022).</text>
</comment>
<comment type="similarity">
    <text evidence="6">Belongs to the SPO71 family.</text>
</comment>
<sequence>MDSIVNVVEDDVKYAQRVTSFSSPQNANVKVFTIPRHSFTAFRLSYVSPTELSACSQVTLLGGIPKQWYADQNNQVWKLLTKISLRKVRKQSDMLRRYGYGTIYKKRVGKIPTALYLRKHFTWSYEDNTSIHNGHRLKEAEMEMKRTRSSPVQKSEYKLSLPRRCRSSSDQNFMRQELLKEKKSELSRNNSLPLIDTAQAVDIHPVLHEEDQENTNKRNKSLLSNLKRKDLGESKSISRKDYSHFDRIPSPSSARSVGETDFNYNREPSEDTLRYPDSIIEVTNRTSPAPNSILSRSGQFVNSNDLSDGFSTSNTINNVGLNANEKIFFNALQSMEKENLMLWKTSQKYGTYLDERRKSADAFQKRERGSCVDIGKLHSSHLPFINILPPWPTELTEEERIIHDRLASKHSHHIRKHVHNARNKTSCKIKDSVGTFLGMTNSLTNKATVKKRTGQILKKEKMLVMVKEAIQNKVPLPNFSENECFDTRVSERWKEYIVIARSTGRFDPPILLQFYRHRHIPEIEDISSIATKYHRNPLDFFLSRNCIVKFYSSLDKTISIQKPDKRLGGFIDESIEKKDELKHYSPIKIFILRCSSIRSSGRWYKFLLESLDRQLFTPAINLKIPLTEISIKINLNEIIFQKLIDLGKQEKDRLKICFLQRGYKIFQHPILRYFTVAILEKLKLAHYDYLIRKWDTENPVLGCALKRYDRLEWIPCDEDSLVTGIFAFCQSHLIQYRPIANRLRETKSLEGKCLKEPTPIEGFLIRLTDKYGSARTNFGKYSISTAYFFTCENLLFSMKAYRANPPLPIDSMIDDTSTEIEKEEIWKQWKKIPEVYEQQPYPLDTNDHIEWMNCQTTQSEYDSRDFYAFHCFHRRIDQILKTDNVIDLTEVKDIYQGTRTDYEADKIKYGVYKEASEIFWHRNYEIDDVSRSVINIETSNGLLLKLLATSATVAEEWVIKLKQMISYWKNKQREDTERLLKIRRSNAGLLMLNGEEETKIGENTLRWIVEHGRADEQTFNANGISLSRPLIQKGPLYQKPHKHSVFSKYYVVLISGFIVLFHCFHRSTTGFAKEVLEYAHYVTIPIDDCYLYSGTTTELDLLQRDRTFDEINYGSHALPRVYGDGWRSVEDESSRCFTLWFGTRRALSSNRLQKKGNEKQYTQDYGRQDNNIDPPSAPEADLNNSNVPSNTDKIHFTKKLGVSGKSMVFMARSRQERDLWVMSIYYELERLRRTASTSNSRNQTM</sequence>
<keyword id="KW-0472">Membrane</keyword>
<keyword id="KW-1185">Reference proteome</keyword>
<keyword id="KW-0749">Sporulation</keyword>
<feature type="chain" id="PRO_0000072140" description="Prospore membrane adapter protein SPO71">
    <location>
        <begin position="1"/>
        <end position="1245"/>
    </location>
</feature>
<feature type="domain" description="PH">
    <location>
        <begin position="1030"/>
        <end position="1229"/>
    </location>
</feature>
<feature type="region of interest" description="Disordered" evidence="1">
    <location>
        <begin position="207"/>
        <end position="270"/>
    </location>
</feature>
<feature type="region of interest" description="Disordered" evidence="1">
    <location>
        <begin position="1154"/>
        <end position="1192"/>
    </location>
</feature>
<feature type="short sequence motif" description="PxP" evidence="4">
    <location>
        <begin position="385"/>
        <end position="399"/>
    </location>
</feature>
<feature type="compositionally biased region" description="Basic and acidic residues" evidence="1">
    <location>
        <begin position="227"/>
        <end position="247"/>
    </location>
</feature>
<feature type="compositionally biased region" description="Polar residues" evidence="1">
    <location>
        <begin position="1159"/>
        <end position="1173"/>
    </location>
</feature>
<feature type="compositionally biased region" description="Polar residues" evidence="1">
    <location>
        <begin position="1182"/>
        <end position="1191"/>
    </location>
</feature>
<feature type="mutagenesis site" description="Disrupts interaction with VPS13." evidence="4">
    <location>
        <begin position="384"/>
        <end position="395"/>
    </location>
</feature>
<feature type="mutagenesis site" description="Disrupts interaction with VPS13." evidence="4">
    <original>PWP</original>
    <variation>AWA</variation>
    <location>
        <begin position="390"/>
        <end position="392"/>
    </location>
</feature>
<name>SPO71_YEAST</name>
<reference key="1">
    <citation type="journal article" date="1997" name="Nature">
        <title>The nucleotide sequence of Saccharomyces cerevisiae chromosome IV.</title>
        <authorList>
            <person name="Jacq C."/>
            <person name="Alt-Moerbe J."/>
            <person name="Andre B."/>
            <person name="Arnold W."/>
            <person name="Bahr A."/>
            <person name="Ballesta J.P.G."/>
            <person name="Bargues M."/>
            <person name="Baron L."/>
            <person name="Becker A."/>
            <person name="Biteau N."/>
            <person name="Bloecker H."/>
            <person name="Blugeon C."/>
            <person name="Boskovic J."/>
            <person name="Brandt P."/>
            <person name="Brueckner M."/>
            <person name="Buitrago M.J."/>
            <person name="Coster F."/>
            <person name="Delaveau T."/>
            <person name="del Rey F."/>
            <person name="Dujon B."/>
            <person name="Eide L.G."/>
            <person name="Garcia-Cantalejo J.M."/>
            <person name="Goffeau A."/>
            <person name="Gomez-Peris A."/>
            <person name="Granotier C."/>
            <person name="Hanemann V."/>
            <person name="Hankeln T."/>
            <person name="Hoheisel J.D."/>
            <person name="Jaeger W."/>
            <person name="Jimenez A."/>
            <person name="Jonniaux J.-L."/>
            <person name="Kraemer C."/>
            <person name="Kuester H."/>
            <person name="Laamanen P."/>
            <person name="Legros Y."/>
            <person name="Louis E.J."/>
            <person name="Moeller-Rieker S."/>
            <person name="Monnet A."/>
            <person name="Moro M."/>
            <person name="Mueller-Auer S."/>
            <person name="Nussbaumer B."/>
            <person name="Paricio N."/>
            <person name="Paulin L."/>
            <person name="Perea J."/>
            <person name="Perez-Alonso M."/>
            <person name="Perez-Ortin J.E."/>
            <person name="Pohl T.M."/>
            <person name="Prydz H."/>
            <person name="Purnelle B."/>
            <person name="Rasmussen S.W."/>
            <person name="Remacha M.A."/>
            <person name="Revuelta J.L."/>
            <person name="Rieger M."/>
            <person name="Salom D."/>
            <person name="Saluz H.P."/>
            <person name="Saiz J.E."/>
            <person name="Saren A.-M."/>
            <person name="Schaefer M."/>
            <person name="Scharfe M."/>
            <person name="Schmidt E.R."/>
            <person name="Schneider C."/>
            <person name="Scholler P."/>
            <person name="Schwarz S."/>
            <person name="Soler-Mira A."/>
            <person name="Urrestarazu L.A."/>
            <person name="Verhasselt P."/>
            <person name="Vissers S."/>
            <person name="Voet M."/>
            <person name="Volckaert G."/>
            <person name="Wagner G."/>
            <person name="Wambutt R."/>
            <person name="Wedler E."/>
            <person name="Wedler H."/>
            <person name="Woelfl S."/>
            <person name="Harris D.E."/>
            <person name="Bowman S."/>
            <person name="Brown D."/>
            <person name="Churcher C.M."/>
            <person name="Connor R."/>
            <person name="Dedman K."/>
            <person name="Gentles S."/>
            <person name="Hamlin N."/>
            <person name="Hunt S."/>
            <person name="Jones L."/>
            <person name="McDonald S."/>
            <person name="Murphy L.D."/>
            <person name="Niblett D."/>
            <person name="Odell C."/>
            <person name="Oliver K."/>
            <person name="Rajandream M.A."/>
            <person name="Richards C."/>
            <person name="Shore L."/>
            <person name="Walsh S.V."/>
            <person name="Barrell B.G."/>
            <person name="Dietrich F.S."/>
            <person name="Mulligan J.T."/>
            <person name="Allen E."/>
            <person name="Araujo R."/>
            <person name="Aviles E."/>
            <person name="Berno A."/>
            <person name="Carpenter J."/>
            <person name="Chen E."/>
            <person name="Cherry J.M."/>
            <person name="Chung E."/>
            <person name="Duncan M."/>
            <person name="Hunicke-Smith S."/>
            <person name="Hyman R.W."/>
            <person name="Komp C."/>
            <person name="Lashkari D."/>
            <person name="Lew H."/>
            <person name="Lin D."/>
            <person name="Mosedale D."/>
            <person name="Nakahara K."/>
            <person name="Namath A."/>
            <person name="Oefner P."/>
            <person name="Oh C."/>
            <person name="Petel F.X."/>
            <person name="Roberts D."/>
            <person name="Schramm S."/>
            <person name="Schroeder M."/>
            <person name="Shogren T."/>
            <person name="Shroff N."/>
            <person name="Winant A."/>
            <person name="Yelton M.A."/>
            <person name="Botstein D."/>
            <person name="Davis R.W."/>
            <person name="Johnston M."/>
            <person name="Andrews S."/>
            <person name="Brinkman R."/>
            <person name="Cooper J."/>
            <person name="Ding H."/>
            <person name="Du Z."/>
            <person name="Favello A."/>
            <person name="Fulton L."/>
            <person name="Gattung S."/>
            <person name="Greco T."/>
            <person name="Hallsworth K."/>
            <person name="Hawkins J."/>
            <person name="Hillier L.W."/>
            <person name="Jier M."/>
            <person name="Johnson D."/>
            <person name="Johnston L."/>
            <person name="Kirsten J."/>
            <person name="Kucaba T."/>
            <person name="Langston Y."/>
            <person name="Latreille P."/>
            <person name="Le T."/>
            <person name="Mardis E."/>
            <person name="Menezes S."/>
            <person name="Miller N."/>
            <person name="Nhan M."/>
            <person name="Pauley A."/>
            <person name="Peluso D."/>
            <person name="Rifkin L."/>
            <person name="Riles L."/>
            <person name="Taich A."/>
            <person name="Trevaskis E."/>
            <person name="Vignati D."/>
            <person name="Wilcox L."/>
            <person name="Wohldman P."/>
            <person name="Vaudin M."/>
            <person name="Wilson R."/>
            <person name="Waterston R."/>
            <person name="Albermann K."/>
            <person name="Hani J."/>
            <person name="Heumann K."/>
            <person name="Kleine K."/>
            <person name="Mewes H.-W."/>
            <person name="Zollner A."/>
            <person name="Zaccaria P."/>
        </authorList>
    </citation>
    <scope>NUCLEOTIDE SEQUENCE [LARGE SCALE GENOMIC DNA]</scope>
    <source>
        <strain>ATCC 204508 / S288c</strain>
    </source>
</reference>
<reference key="2">
    <citation type="journal article" date="2014" name="G3 (Bethesda)">
        <title>The reference genome sequence of Saccharomyces cerevisiae: Then and now.</title>
        <authorList>
            <person name="Engel S.R."/>
            <person name="Dietrich F.S."/>
            <person name="Fisk D.G."/>
            <person name="Binkley G."/>
            <person name="Balakrishnan R."/>
            <person name="Costanzo M.C."/>
            <person name="Dwight S.S."/>
            <person name="Hitz B.C."/>
            <person name="Karra K."/>
            <person name="Nash R.S."/>
            <person name="Weng S."/>
            <person name="Wong E.D."/>
            <person name="Lloyd P."/>
            <person name="Skrzypek M.S."/>
            <person name="Miyasato S.R."/>
            <person name="Simison M."/>
            <person name="Cherry J.M."/>
        </authorList>
    </citation>
    <scope>GENOME REANNOTATION</scope>
    <source>
        <strain>ATCC 204508 / S288c</strain>
    </source>
</reference>
<reference key="3">
    <citation type="journal article" date="1998" name="Science">
        <title>The transcriptional program of sporulation in budding yeast.</title>
        <authorList>
            <person name="Chu S."/>
            <person name="DeRisi J."/>
            <person name="Eisen M."/>
            <person name="Mulholland J."/>
            <person name="Botstein D."/>
            <person name="Brown P.O."/>
            <person name="Herskowitz I."/>
        </authorList>
    </citation>
    <scope>DEVELOPMENTAL STAGE</scope>
</reference>
<reference key="4">
    <citation type="journal article" date="2012" name="Eukaryot. Cell">
        <title>SPO71 mediates prospore membrane size and maturation in Saccharomyces cerevisiae.</title>
        <authorList>
            <person name="Parodi E.M."/>
            <person name="Baker C.S."/>
            <person name="Tetzlaff C."/>
            <person name="Villahermosa S."/>
            <person name="Huang L.S."/>
        </authorList>
    </citation>
    <scope>FUNCTION</scope>
    <scope>SUBCELLULAR LOCATION</scope>
    <scope>DEVELOPMENTAL STAGE</scope>
    <scope>DISRUPTION PHENOTYPE</scope>
</reference>
<reference key="5">
    <citation type="journal article" date="2013" name="Eukaryot. Cell">
        <title>SPO71 encodes a developmental stage-specific partner for Vps13 in Saccharomyces cerevisiae.</title>
        <authorList>
            <person name="Park J.S."/>
            <person name="Okumura Y."/>
            <person name="Tachikawa H."/>
            <person name="Neiman A.M."/>
        </authorList>
    </citation>
    <scope>FUNCTION</scope>
    <scope>INTERACTION WITH VPS13</scope>
    <scope>SUBCELLULAR LOCATION</scope>
    <scope>DISRUPTION PHENOTYPE</scope>
</reference>
<reference key="6">
    <citation type="journal article" date="2018" name="J. Cell Biol.">
        <title>Competitive organelle-specific adaptors recruit Vps13 to membrane contact sites.</title>
        <authorList>
            <person name="Bean B.D.M."/>
            <person name="Dziurdzik S.K."/>
            <person name="Kolehmainen K.L."/>
            <person name="Fowler C.M.S."/>
            <person name="Kwong W.K."/>
            <person name="Grad L.I."/>
            <person name="Davey M."/>
            <person name="Schluter C."/>
            <person name="Conibear E."/>
        </authorList>
    </citation>
    <scope>INTERACTION WITH VPS13</scope>
    <scope>MUTAGENESIS OF 384-PHE--LEU-395 AND 390-PRO--PRO-392</scope>
</reference>